<dbReference type="EMBL" id="DQ117911">
    <property type="protein sequence ID" value="AAZ30401.1"/>
    <property type="molecule type" value="mRNA"/>
</dbReference>
<dbReference type="SMR" id="P0DKE3"/>
<dbReference type="GO" id="GO:0005938">
    <property type="term" value="C:cell cortex"/>
    <property type="evidence" value="ECO:0007669"/>
    <property type="project" value="TreeGrafter"/>
</dbReference>
<dbReference type="GO" id="GO:0005856">
    <property type="term" value="C:cytoskeleton"/>
    <property type="evidence" value="ECO:0007669"/>
    <property type="project" value="UniProtKB-SubCell"/>
</dbReference>
<dbReference type="GO" id="GO:0003785">
    <property type="term" value="F:actin monomer binding"/>
    <property type="evidence" value="ECO:0007669"/>
    <property type="project" value="TreeGrafter"/>
</dbReference>
<dbReference type="CDD" id="cd00148">
    <property type="entry name" value="PROF"/>
    <property type="match status" value="1"/>
</dbReference>
<dbReference type="FunFam" id="3.30.450.30:FF:000001">
    <property type="entry name" value="Profilin"/>
    <property type="match status" value="1"/>
</dbReference>
<dbReference type="Gene3D" id="3.30.450.30">
    <property type="entry name" value="Dynein light chain 2a, cytoplasmic"/>
    <property type="match status" value="1"/>
</dbReference>
<dbReference type="InterPro" id="IPR048278">
    <property type="entry name" value="PFN"/>
</dbReference>
<dbReference type="InterPro" id="IPR005455">
    <property type="entry name" value="PFN_euk"/>
</dbReference>
<dbReference type="InterPro" id="IPR036140">
    <property type="entry name" value="PFN_sf"/>
</dbReference>
<dbReference type="InterPro" id="IPR027310">
    <property type="entry name" value="Profilin_CS"/>
</dbReference>
<dbReference type="PANTHER" id="PTHR11604">
    <property type="entry name" value="PROFILIN"/>
    <property type="match status" value="1"/>
</dbReference>
<dbReference type="PANTHER" id="PTHR11604:SF25">
    <property type="entry name" value="PROFILIN-5"/>
    <property type="match status" value="1"/>
</dbReference>
<dbReference type="Pfam" id="PF00235">
    <property type="entry name" value="Profilin"/>
    <property type="match status" value="1"/>
</dbReference>
<dbReference type="PRINTS" id="PR00392">
    <property type="entry name" value="PROFILIN"/>
</dbReference>
<dbReference type="PRINTS" id="PR01640">
    <property type="entry name" value="PROFILINPLNT"/>
</dbReference>
<dbReference type="SMART" id="SM00392">
    <property type="entry name" value="PROF"/>
    <property type="match status" value="1"/>
</dbReference>
<dbReference type="SUPFAM" id="SSF55770">
    <property type="entry name" value="Profilin (actin-binding protein)"/>
    <property type="match status" value="1"/>
</dbReference>
<dbReference type="PROSITE" id="PS00414">
    <property type="entry name" value="PROFILIN"/>
    <property type="match status" value="1"/>
</dbReference>
<accession>P0DKE3</accession>
<accession>A4GD52</accession>
<keyword id="KW-0009">Actin-binding</keyword>
<keyword id="KW-0020">Allergen</keyword>
<keyword id="KW-0963">Cytoplasm</keyword>
<keyword id="KW-0206">Cytoskeleton</keyword>
<keyword id="KW-1015">Disulfide bond</keyword>
<keyword id="KW-0597">Phosphoprotein</keyword>
<protein>
    <recommendedName>
        <fullName>Profilin-2</fullName>
    </recommendedName>
    <alternativeName>
        <fullName>Pollen allergen Ole e 2</fullName>
    </alternativeName>
    <allergenName>Ole e 2</allergenName>
</protein>
<evidence type="ECO:0000250" key="1"/>
<evidence type="ECO:0000305" key="2"/>
<evidence type="ECO:0000305" key="3">
    <source>
    </source>
</evidence>
<organism>
    <name type="scientific">Olea europaea</name>
    <name type="common">Common olive</name>
    <dbReference type="NCBI Taxonomy" id="4146"/>
    <lineage>
        <taxon>Eukaryota</taxon>
        <taxon>Viridiplantae</taxon>
        <taxon>Streptophyta</taxon>
        <taxon>Embryophyta</taxon>
        <taxon>Tracheophyta</taxon>
        <taxon>Spermatophyta</taxon>
        <taxon>Magnoliopsida</taxon>
        <taxon>eudicotyledons</taxon>
        <taxon>Gunneridae</taxon>
        <taxon>Pentapetalae</taxon>
        <taxon>asterids</taxon>
        <taxon>lamiids</taxon>
        <taxon>Lamiales</taxon>
        <taxon>Oleaceae</taxon>
        <taxon>Oleeae</taxon>
        <taxon>Olea</taxon>
    </lineage>
</organism>
<sequence>MSWQTYVDDHLMCDIEGHEDHRLTAAAIVGHDGSVWAQSATFPQFKPEEMNGIMTDFNEPGHLAPTGLHLGGTKYMVIQGEAGAVIRGKKGSGGITIKKTGQALVFGIYEEPVTPGQCNMVVERLGDYLLEQGL</sequence>
<reference key="1">
    <citation type="journal article" date="2012" name="PLoS ONE">
        <title>Characterization of profilin polymorphism in pollen with a focus on multifunctionality.</title>
        <authorList>
            <person name="Jimenez-Lopez J.C."/>
            <person name="Morales S."/>
            <person name="Castro A.J."/>
            <person name="Volkmann D."/>
            <person name="Rodriguez-Garcia M.I."/>
            <person name="Alche Jde D."/>
        </authorList>
    </citation>
    <scope>NUCLEOTIDE SEQUENCE [MRNA]</scope>
    <scope>POLYMORPHISM</scope>
    <source>
        <strain>cv. Manzanilla de Sevilla</strain>
    </source>
</reference>
<reference key="2">
    <citation type="journal article" date="2013" name="PLoS ONE">
        <title>Analysis of the effects of polymorphism on pollen profilin structural functionality and the generation of conformational, T- and B-cell epitopes.</title>
        <authorList>
            <person name="Jimenez-Lopez J.C."/>
            <person name="Rodriguez-Garcia M.I."/>
            <person name="Alche J.D."/>
        </authorList>
    </citation>
    <scope>3D-STRUCTURE MODELING</scope>
    <scope>DISULFIDE BOND</scope>
</reference>
<name>PROFV_OLEEU</name>
<comment type="function">
    <text evidence="1">Binds to actin and affects the structure of the cytoskeleton. At high concentrations, profilin prevents the polymerization of actin, whereas it enhances it at low concentrations (By similarity).</text>
</comment>
<comment type="subunit">
    <text evidence="1">Occurs in many kinds of cells as a complex with monomeric actin in a 1:1 ratio.</text>
</comment>
<comment type="subcellular location">
    <subcellularLocation>
        <location evidence="1">Cytoplasm</location>
        <location evidence="1">Cytoskeleton</location>
    </subcellularLocation>
</comment>
<comment type="PTM">
    <text evidence="1">Phosphorylated by MAP kinases.</text>
</comment>
<comment type="polymorphism">
    <text>Several isoforms of the allergen exist due to polymorphism.</text>
</comment>
<comment type="allergen">
    <text>Causes an allergic reaction in human.</text>
</comment>
<comment type="miscellaneous">
    <text evidence="3">The variability of the residues taking part of IgE-binding epitopes might be responsible of the difference in cross-reactivity among olive pollen cultivars, and between distantly related pollen species, leading to a variable range of allergy reactions among atopic patients.</text>
</comment>
<comment type="similarity">
    <text evidence="2">Belongs to the profilin family.</text>
</comment>
<proteinExistence type="evidence at protein level"/>
<feature type="initiator methionine" description="Removed" evidence="1">
    <location>
        <position position="1"/>
    </location>
</feature>
<feature type="chain" id="PRO_0000424987" description="Profilin-2">
    <location>
        <begin position="2"/>
        <end position="134"/>
    </location>
</feature>
<feature type="short sequence motif" description="Involved in PIP2 interaction">
    <location>
        <begin position="84"/>
        <end position="100"/>
    </location>
</feature>
<feature type="modified residue" description="Phosphothreonine" evidence="1">
    <location>
        <position position="114"/>
    </location>
</feature>
<feature type="disulfide bond" evidence="3">
    <location>
        <begin position="13"/>
        <end position="118"/>
    </location>
</feature>